<sequence>GGGGSGETSGMWFGPRL</sequence>
<comment type="function">
    <text evidence="1">Mediates visceral muscle contractile activity (myotropic activity).</text>
</comment>
<comment type="subcellular location">
    <subcellularLocation>
        <location>Secreted</location>
    </subcellularLocation>
</comment>
<comment type="tissue specificity">
    <text evidence="2">Mainly in abdominal perisympathetic organs and to a lesser extent in retrocerebral complex.</text>
</comment>
<comment type="mass spectrometry"/>
<comment type="similarity">
    <text evidence="4">Belongs to the pyrokinin family.</text>
</comment>
<accession>P82617</accession>
<evidence type="ECO:0000269" key="1">
    <source>
    </source>
</evidence>
<evidence type="ECO:0000269" key="2">
    <source>
    </source>
</evidence>
<evidence type="ECO:0000269" key="3">
    <source>
    </source>
</evidence>
<evidence type="ECO:0000305" key="4"/>
<dbReference type="GO" id="GO:0005576">
    <property type="term" value="C:extracellular region"/>
    <property type="evidence" value="ECO:0007669"/>
    <property type="project" value="UniProtKB-SubCell"/>
</dbReference>
<dbReference type="GO" id="GO:0005184">
    <property type="term" value="F:neuropeptide hormone activity"/>
    <property type="evidence" value="ECO:0007669"/>
    <property type="project" value="InterPro"/>
</dbReference>
<dbReference type="GO" id="GO:0007218">
    <property type="term" value="P:neuropeptide signaling pathway"/>
    <property type="evidence" value="ECO:0007669"/>
    <property type="project" value="UniProtKB-KW"/>
</dbReference>
<dbReference type="InterPro" id="IPR001484">
    <property type="entry name" value="Pyrokinin_CS"/>
</dbReference>
<dbReference type="PROSITE" id="PS00539">
    <property type="entry name" value="PYROKININ"/>
    <property type="match status" value="1"/>
</dbReference>
<protein>
    <recommendedName>
        <fullName>Pyrokinin-5</fullName>
        <shortName>Pea-PK-5</shortName>
    </recommendedName>
    <alternativeName>
        <fullName>FXPRL-amide</fullName>
    </alternativeName>
    <alternativeName>
        <fullName>PerAm-Capa-PK</fullName>
    </alternativeName>
</protein>
<organism>
    <name type="scientific">Periplaneta americana</name>
    <name type="common">American cockroach</name>
    <name type="synonym">Blatta americana</name>
    <dbReference type="NCBI Taxonomy" id="6978"/>
    <lineage>
        <taxon>Eukaryota</taxon>
        <taxon>Metazoa</taxon>
        <taxon>Ecdysozoa</taxon>
        <taxon>Arthropoda</taxon>
        <taxon>Hexapoda</taxon>
        <taxon>Insecta</taxon>
        <taxon>Pterygota</taxon>
        <taxon>Neoptera</taxon>
        <taxon>Polyneoptera</taxon>
        <taxon>Dictyoptera</taxon>
        <taxon>Blattodea</taxon>
        <taxon>Blattoidea</taxon>
        <taxon>Blattidae</taxon>
        <taxon>Blattinae</taxon>
        <taxon>Periplaneta</taxon>
    </lineage>
</organism>
<feature type="peptide" id="PRO_0000044349" description="Pyrokinin-5">
    <location>
        <begin position="1"/>
        <end position="17"/>
    </location>
</feature>
<feature type="modified residue" description="Leucine amide" evidence="1 3">
    <location>
        <position position="17"/>
    </location>
</feature>
<keyword id="KW-0027">Amidation</keyword>
<keyword id="KW-0903">Direct protein sequencing</keyword>
<keyword id="KW-0527">Neuropeptide</keyword>
<keyword id="KW-0964">Secreted</keyword>
<name>PPK5_PERAM</name>
<proteinExistence type="evidence at protein level"/>
<reference key="1">
    <citation type="journal article" date="1999" name="Insect Biochem. Mol. Biol.">
        <title>Differential distribution of pyrokinin-isoforms in cerebral and abdominal neurohemal organs of the American cockroach.</title>
        <authorList>
            <person name="Predel R."/>
            <person name="Kellner R."/>
            <person name="Nachman R.J."/>
            <person name="Holman G.M."/>
            <person name="Rapus J."/>
            <person name="Gaede G."/>
        </authorList>
    </citation>
    <scope>PROTEIN SEQUENCE</scope>
    <scope>AMIDATION AT LEU-17</scope>
    <scope>FUNCTION</scope>
    <scope>MASS SPECTROMETRY</scope>
    <source>
        <tissue>Abdominal perisympathetic organs</tissue>
    </source>
</reference>
<reference key="2">
    <citation type="journal article" date="2000" name="J. Comp. Neurol.">
        <title>Tagma-specific distribution of FXPRLamides in the nervous system of the American cockroach.</title>
        <authorList>
            <person name="Predel R."/>
            <person name="Eckert M."/>
        </authorList>
    </citation>
    <scope>TISSUE SPECIFICITY</scope>
</reference>
<reference key="3">
    <citation type="journal article" date="2009" name="BMC Evol. Biol.">
        <title>A proteomic approach for studying insect phylogeny: CAPA peptides of ancient insect taxa (Dictyoptera, Blattoptera) as a test case.</title>
        <authorList>
            <person name="Roth S."/>
            <person name="Fromm B."/>
            <person name="Gaede G."/>
            <person name="Predel R."/>
        </authorList>
    </citation>
    <scope>PROTEIN SEQUENCE</scope>
    <scope>AMIDATION AT LEU-17</scope>
    <source>
        <tissue>Abdominal perisympathetic organs</tissue>
    </source>
</reference>